<feature type="chain" id="PRO_0000215530" description="Uncharacterized protein MW0938">
    <location>
        <begin position="1"/>
        <end position="156"/>
    </location>
</feature>
<organism>
    <name type="scientific">Staphylococcus aureus (strain MW2)</name>
    <dbReference type="NCBI Taxonomy" id="196620"/>
    <lineage>
        <taxon>Bacteria</taxon>
        <taxon>Bacillati</taxon>
        <taxon>Bacillota</taxon>
        <taxon>Bacilli</taxon>
        <taxon>Bacillales</taxon>
        <taxon>Staphylococcaceae</taxon>
        <taxon>Staphylococcus</taxon>
    </lineage>
</organism>
<reference key="1">
    <citation type="journal article" date="2002" name="Lancet">
        <title>Genome and virulence determinants of high virulence community-acquired MRSA.</title>
        <authorList>
            <person name="Baba T."/>
            <person name="Takeuchi F."/>
            <person name="Kuroda M."/>
            <person name="Yuzawa H."/>
            <person name="Aoki K."/>
            <person name="Oguchi A."/>
            <person name="Nagai Y."/>
            <person name="Iwama N."/>
            <person name="Asano K."/>
            <person name="Naimi T."/>
            <person name="Kuroda H."/>
            <person name="Cui L."/>
            <person name="Yamamoto K."/>
            <person name="Hiramatsu K."/>
        </authorList>
    </citation>
    <scope>NUCLEOTIDE SEQUENCE [LARGE SCALE GENOMIC DNA]</scope>
    <source>
        <strain>MW2</strain>
    </source>
</reference>
<name>Y938_STAAW</name>
<sequence>MSRKTYEKIANINGMFNMLEQQIIHSQDMAHFRSEFFYVNHEHRENYEALLIYYKNSIDNPIVDGACYILALPEIFNSVDVFESELPFSWVYDENGITETMKSLSIPLQYLVAAALEVTDVNIFKPSGFTMGMNNWNIAQMRIFWQYTAIIRKEAL</sequence>
<accession>P0A0Q3</accession>
<accession>P52079</accession>
<proteinExistence type="predicted"/>
<dbReference type="EMBL" id="BA000033">
    <property type="protein sequence ID" value="BAB94803.1"/>
    <property type="molecule type" value="Genomic_DNA"/>
</dbReference>
<dbReference type="RefSeq" id="WP_000088431.1">
    <property type="nucleotide sequence ID" value="NC_003923.1"/>
</dbReference>
<dbReference type="SMR" id="P0A0Q3"/>
<dbReference type="KEGG" id="sam:MW0938"/>
<dbReference type="HOGENOM" id="CLU_1685497_0_0_9"/>
<dbReference type="InterPro" id="IPR024469">
    <property type="entry name" value="DUF2538"/>
</dbReference>
<dbReference type="Pfam" id="PF10804">
    <property type="entry name" value="DUF2538"/>
    <property type="match status" value="1"/>
</dbReference>
<protein>
    <recommendedName>
        <fullName>Uncharacterized protein MW0938</fullName>
    </recommendedName>
</protein>
<gene>
    <name type="ordered locus">MW0938</name>
</gene>